<proteinExistence type="inferred from homology"/>
<reference key="1">
    <citation type="journal article" date="1997" name="Microbiology">
        <title>The Bacillus subtilis genome from gerBC (311 degrees) to licR (334 degrees).</title>
        <authorList>
            <person name="Presecan E."/>
            <person name="Moszer I."/>
            <person name="Boursier L."/>
            <person name="Cruz Ramos H."/>
            <person name="De La Fuente V."/>
            <person name="Hullo M.-F."/>
            <person name="Lelong C."/>
            <person name="Schleich S."/>
            <person name="Sekowska A."/>
            <person name="Song B.H."/>
            <person name="Villani G."/>
            <person name="Kunst F."/>
            <person name="Danchin A."/>
            <person name="Glaser P."/>
        </authorList>
    </citation>
    <scope>NUCLEOTIDE SEQUENCE [GENOMIC DNA]</scope>
    <source>
        <strain>168</strain>
    </source>
</reference>
<reference key="2">
    <citation type="journal article" date="1997" name="Nature">
        <title>The complete genome sequence of the Gram-positive bacterium Bacillus subtilis.</title>
        <authorList>
            <person name="Kunst F."/>
            <person name="Ogasawara N."/>
            <person name="Moszer I."/>
            <person name="Albertini A.M."/>
            <person name="Alloni G."/>
            <person name="Azevedo V."/>
            <person name="Bertero M.G."/>
            <person name="Bessieres P."/>
            <person name="Bolotin A."/>
            <person name="Borchert S."/>
            <person name="Borriss R."/>
            <person name="Boursier L."/>
            <person name="Brans A."/>
            <person name="Braun M."/>
            <person name="Brignell S.C."/>
            <person name="Bron S."/>
            <person name="Brouillet S."/>
            <person name="Bruschi C.V."/>
            <person name="Caldwell B."/>
            <person name="Capuano V."/>
            <person name="Carter N.M."/>
            <person name="Choi S.-K."/>
            <person name="Codani J.-J."/>
            <person name="Connerton I.F."/>
            <person name="Cummings N.J."/>
            <person name="Daniel R.A."/>
            <person name="Denizot F."/>
            <person name="Devine K.M."/>
            <person name="Duesterhoeft A."/>
            <person name="Ehrlich S.D."/>
            <person name="Emmerson P.T."/>
            <person name="Entian K.-D."/>
            <person name="Errington J."/>
            <person name="Fabret C."/>
            <person name="Ferrari E."/>
            <person name="Foulger D."/>
            <person name="Fritz C."/>
            <person name="Fujita M."/>
            <person name="Fujita Y."/>
            <person name="Fuma S."/>
            <person name="Galizzi A."/>
            <person name="Galleron N."/>
            <person name="Ghim S.-Y."/>
            <person name="Glaser P."/>
            <person name="Goffeau A."/>
            <person name="Golightly E.J."/>
            <person name="Grandi G."/>
            <person name="Guiseppi G."/>
            <person name="Guy B.J."/>
            <person name="Haga K."/>
            <person name="Haiech J."/>
            <person name="Harwood C.R."/>
            <person name="Henaut A."/>
            <person name="Hilbert H."/>
            <person name="Holsappel S."/>
            <person name="Hosono S."/>
            <person name="Hullo M.-F."/>
            <person name="Itaya M."/>
            <person name="Jones L.-M."/>
            <person name="Joris B."/>
            <person name="Karamata D."/>
            <person name="Kasahara Y."/>
            <person name="Klaerr-Blanchard M."/>
            <person name="Klein C."/>
            <person name="Kobayashi Y."/>
            <person name="Koetter P."/>
            <person name="Koningstein G."/>
            <person name="Krogh S."/>
            <person name="Kumano M."/>
            <person name="Kurita K."/>
            <person name="Lapidus A."/>
            <person name="Lardinois S."/>
            <person name="Lauber J."/>
            <person name="Lazarevic V."/>
            <person name="Lee S.-M."/>
            <person name="Levine A."/>
            <person name="Liu H."/>
            <person name="Masuda S."/>
            <person name="Mauel C."/>
            <person name="Medigue C."/>
            <person name="Medina N."/>
            <person name="Mellado R.P."/>
            <person name="Mizuno M."/>
            <person name="Moestl D."/>
            <person name="Nakai S."/>
            <person name="Noback M."/>
            <person name="Noone D."/>
            <person name="O'Reilly M."/>
            <person name="Ogawa K."/>
            <person name="Ogiwara A."/>
            <person name="Oudega B."/>
            <person name="Park S.-H."/>
            <person name="Parro V."/>
            <person name="Pohl T.M."/>
            <person name="Portetelle D."/>
            <person name="Porwollik S."/>
            <person name="Prescott A.M."/>
            <person name="Presecan E."/>
            <person name="Pujic P."/>
            <person name="Purnelle B."/>
            <person name="Rapoport G."/>
            <person name="Rey M."/>
            <person name="Reynolds S."/>
            <person name="Rieger M."/>
            <person name="Rivolta C."/>
            <person name="Rocha E."/>
            <person name="Roche B."/>
            <person name="Rose M."/>
            <person name="Sadaie Y."/>
            <person name="Sato T."/>
            <person name="Scanlan E."/>
            <person name="Schleich S."/>
            <person name="Schroeter R."/>
            <person name="Scoffone F."/>
            <person name="Sekiguchi J."/>
            <person name="Sekowska A."/>
            <person name="Seror S.J."/>
            <person name="Serror P."/>
            <person name="Shin B.-S."/>
            <person name="Soldo B."/>
            <person name="Sorokin A."/>
            <person name="Tacconi E."/>
            <person name="Takagi T."/>
            <person name="Takahashi H."/>
            <person name="Takemaru K."/>
            <person name="Takeuchi M."/>
            <person name="Tamakoshi A."/>
            <person name="Tanaka T."/>
            <person name="Terpstra P."/>
            <person name="Tognoni A."/>
            <person name="Tosato V."/>
            <person name="Uchiyama S."/>
            <person name="Vandenbol M."/>
            <person name="Vannier F."/>
            <person name="Vassarotti A."/>
            <person name="Viari A."/>
            <person name="Wambutt R."/>
            <person name="Wedler E."/>
            <person name="Wedler H."/>
            <person name="Weitzenegger T."/>
            <person name="Winters P."/>
            <person name="Wipat A."/>
            <person name="Yamamoto H."/>
            <person name="Yamane K."/>
            <person name="Yasumoto K."/>
            <person name="Yata K."/>
            <person name="Yoshida K."/>
            <person name="Yoshikawa H.-F."/>
            <person name="Zumstein E."/>
            <person name="Yoshikawa H."/>
            <person name="Danchin A."/>
        </authorList>
    </citation>
    <scope>NUCLEOTIDE SEQUENCE [LARGE SCALE GENOMIC DNA]</scope>
    <source>
        <strain>168</strain>
    </source>
</reference>
<sequence>MKNHPYRDMTAAMVRTGILGFGGGPSVIPLIRHEAVNKYKWIDDDEFGEILAIANALPGPIATKMAAYLGFKLKGTLGAIVAILAHILPTCLAMVGLFAAVNVLSHSAIVAGMIGAVTPVIAVMLGIMAYEFGQKALKGFGWVTGILFFIIAFIGLQTLQINPGLVIIIFLAYGAFHFKLKDKITNKHSKDKGMSAS</sequence>
<comment type="subcellular location">
    <subcellularLocation>
        <location evidence="2">Cell membrane</location>
        <topology evidence="2">Multi-pass membrane protein</topology>
    </subcellularLocation>
</comment>
<comment type="similarity">
    <text evidence="2">Belongs to the chromate ion transporter (CHR) (TC 2.A.51) family.</text>
</comment>
<accession>O05216</accession>
<accession>Q795C2</accession>
<evidence type="ECO:0000255" key="1"/>
<evidence type="ECO:0000305" key="2"/>
<gene>
    <name type="primary">ywrB</name>
    <name type="ordered locus">BSU36120</name>
</gene>
<organism>
    <name type="scientific">Bacillus subtilis (strain 168)</name>
    <dbReference type="NCBI Taxonomy" id="224308"/>
    <lineage>
        <taxon>Bacteria</taxon>
        <taxon>Bacillati</taxon>
        <taxon>Bacillota</taxon>
        <taxon>Bacilli</taxon>
        <taxon>Bacillales</taxon>
        <taxon>Bacillaceae</taxon>
        <taxon>Bacillus</taxon>
    </lineage>
</organism>
<name>YWRB_BACSU</name>
<dbReference type="EMBL" id="Z93767">
    <property type="protein sequence ID" value="CAB07797.1"/>
    <property type="molecule type" value="Genomic_DNA"/>
</dbReference>
<dbReference type="EMBL" id="AL009126">
    <property type="protein sequence ID" value="CAB15629.1"/>
    <property type="molecule type" value="Genomic_DNA"/>
</dbReference>
<dbReference type="PIR" id="D70068">
    <property type="entry name" value="D70068"/>
</dbReference>
<dbReference type="FunCoup" id="O05216">
    <property type="interactions" value="3"/>
</dbReference>
<dbReference type="STRING" id="224308.BSU36120"/>
<dbReference type="TCDB" id="2.A.51.1.5">
    <property type="family name" value="the chromate ion transporter (chr) family"/>
</dbReference>
<dbReference type="PaxDb" id="224308-BSU36120"/>
<dbReference type="EnsemblBacteria" id="CAB15629">
    <property type="protein sequence ID" value="CAB15629"/>
    <property type="gene ID" value="BSU_36120"/>
</dbReference>
<dbReference type="GeneID" id="936876"/>
<dbReference type="KEGG" id="bsu:BSU36120"/>
<dbReference type="PATRIC" id="fig|224308.179.peg.3909"/>
<dbReference type="eggNOG" id="COG2059">
    <property type="taxonomic scope" value="Bacteria"/>
</dbReference>
<dbReference type="InParanoid" id="O05216"/>
<dbReference type="OrthoDB" id="9027281at2"/>
<dbReference type="PhylomeDB" id="O05216"/>
<dbReference type="BioCyc" id="BSUB:BSU36120-MONOMER"/>
<dbReference type="Proteomes" id="UP000001570">
    <property type="component" value="Chromosome"/>
</dbReference>
<dbReference type="GO" id="GO:0005886">
    <property type="term" value="C:plasma membrane"/>
    <property type="evidence" value="ECO:0007669"/>
    <property type="project" value="UniProtKB-SubCell"/>
</dbReference>
<dbReference type="GO" id="GO:0015109">
    <property type="term" value="F:chromate transmembrane transporter activity"/>
    <property type="evidence" value="ECO:0007669"/>
    <property type="project" value="InterPro"/>
</dbReference>
<dbReference type="InterPro" id="IPR052518">
    <property type="entry name" value="CHR_Transporter"/>
</dbReference>
<dbReference type="InterPro" id="IPR003370">
    <property type="entry name" value="Chromate_transpt"/>
</dbReference>
<dbReference type="PANTHER" id="PTHR43663">
    <property type="entry name" value="CHROMATE TRANSPORT PROTEIN-RELATED"/>
    <property type="match status" value="1"/>
</dbReference>
<dbReference type="PANTHER" id="PTHR43663:SF1">
    <property type="entry name" value="CHROMATE TRANSPORTER"/>
    <property type="match status" value="1"/>
</dbReference>
<dbReference type="Pfam" id="PF02417">
    <property type="entry name" value="Chromate_transp"/>
    <property type="match status" value="1"/>
</dbReference>
<protein>
    <recommendedName>
        <fullName>Uncharacterized transporter YwrB</fullName>
    </recommendedName>
</protein>
<keyword id="KW-1003">Cell membrane</keyword>
<keyword id="KW-0472">Membrane</keyword>
<keyword id="KW-1185">Reference proteome</keyword>
<keyword id="KW-0812">Transmembrane</keyword>
<keyword id="KW-1133">Transmembrane helix</keyword>
<keyword id="KW-0813">Transport</keyword>
<feature type="chain" id="PRO_0000360179" description="Uncharacterized transporter YwrB">
    <location>
        <begin position="1"/>
        <end position="197"/>
    </location>
</feature>
<feature type="transmembrane region" description="Helical" evidence="1">
    <location>
        <begin position="11"/>
        <end position="31"/>
    </location>
</feature>
<feature type="transmembrane region" description="Helical" evidence="1">
    <location>
        <begin position="50"/>
        <end position="70"/>
    </location>
</feature>
<feature type="transmembrane region" description="Helical" evidence="1">
    <location>
        <begin position="79"/>
        <end position="99"/>
    </location>
</feature>
<feature type="transmembrane region" description="Helical" evidence="1">
    <location>
        <begin position="108"/>
        <end position="128"/>
    </location>
</feature>
<feature type="transmembrane region" description="Helical" evidence="1">
    <location>
        <begin position="136"/>
        <end position="156"/>
    </location>
</feature>
<feature type="transmembrane region" description="Helical" evidence="1">
    <location>
        <begin position="158"/>
        <end position="178"/>
    </location>
</feature>